<accession>C5D4D8</accession>
<reference key="1">
    <citation type="submission" date="2009-06" db="EMBL/GenBank/DDBJ databases">
        <title>Complete sequence of chromosome of Geopacillus sp. WCH70.</title>
        <authorList>
            <consortium name="US DOE Joint Genome Institute"/>
            <person name="Lucas S."/>
            <person name="Copeland A."/>
            <person name="Lapidus A."/>
            <person name="Glavina del Rio T."/>
            <person name="Dalin E."/>
            <person name="Tice H."/>
            <person name="Bruce D."/>
            <person name="Goodwin L."/>
            <person name="Pitluck S."/>
            <person name="Chertkov O."/>
            <person name="Brettin T."/>
            <person name="Detter J.C."/>
            <person name="Han C."/>
            <person name="Larimer F."/>
            <person name="Land M."/>
            <person name="Hauser L."/>
            <person name="Kyrpides N."/>
            <person name="Mikhailova N."/>
            <person name="Brumm P."/>
            <person name="Mead D.A."/>
            <person name="Richardson P."/>
        </authorList>
    </citation>
    <scope>NUCLEOTIDE SEQUENCE [LARGE SCALE GENOMIC DNA]</scope>
    <source>
        <strain>WCH70</strain>
    </source>
</reference>
<name>SPRTL_GEOSW</name>
<evidence type="ECO:0000255" key="1">
    <source>
        <dbReference type="HAMAP-Rule" id="MF_00745"/>
    </source>
</evidence>
<organism>
    <name type="scientific">Geobacillus sp. (strain WCH70)</name>
    <dbReference type="NCBI Taxonomy" id="471223"/>
    <lineage>
        <taxon>Bacteria</taxon>
        <taxon>Bacillati</taxon>
        <taxon>Bacillota</taxon>
        <taxon>Bacilli</taxon>
        <taxon>Bacillales</taxon>
        <taxon>Anoxybacillaceae</taxon>
        <taxon>Geobacillus</taxon>
    </lineage>
</organism>
<comment type="cofactor">
    <cofactor evidence="1">
        <name>Zn(2+)</name>
        <dbReference type="ChEBI" id="CHEBI:29105"/>
    </cofactor>
    <text evidence="1">Binds 1 zinc ion.</text>
</comment>
<comment type="subcellular location">
    <subcellularLocation>
        <location evidence="1">Cytoplasm</location>
    </subcellularLocation>
</comment>
<comment type="similarity">
    <text evidence="1">Belongs to the SprT family.</text>
</comment>
<dbReference type="EMBL" id="CP001638">
    <property type="protein sequence ID" value="ACS23146.1"/>
    <property type="molecule type" value="Genomic_DNA"/>
</dbReference>
<dbReference type="RefSeq" id="WP_012748967.1">
    <property type="nucleotide sequence ID" value="NZ_CP070511.1"/>
</dbReference>
<dbReference type="STRING" id="471223.GWCH70_0215"/>
<dbReference type="KEGG" id="gwc:GWCH70_0215"/>
<dbReference type="eggNOG" id="COG3091">
    <property type="taxonomic scope" value="Bacteria"/>
</dbReference>
<dbReference type="HOGENOM" id="CLU_123820_0_0_9"/>
<dbReference type="OrthoDB" id="9799909at2"/>
<dbReference type="GO" id="GO:0005737">
    <property type="term" value="C:cytoplasm"/>
    <property type="evidence" value="ECO:0007669"/>
    <property type="project" value="UniProtKB-SubCell"/>
</dbReference>
<dbReference type="GO" id="GO:0008270">
    <property type="term" value="F:zinc ion binding"/>
    <property type="evidence" value="ECO:0007669"/>
    <property type="project" value="UniProtKB-UniRule"/>
</dbReference>
<dbReference type="GO" id="GO:0006950">
    <property type="term" value="P:response to stress"/>
    <property type="evidence" value="ECO:0007669"/>
    <property type="project" value="UniProtKB-ARBA"/>
</dbReference>
<dbReference type="HAMAP" id="MF_00745">
    <property type="entry name" value="SprT_like"/>
    <property type="match status" value="1"/>
</dbReference>
<dbReference type="InterPro" id="IPR006640">
    <property type="entry name" value="SprT-like_domain"/>
</dbReference>
<dbReference type="InterPro" id="IPR035240">
    <property type="entry name" value="SprT_Zn_ribbon"/>
</dbReference>
<dbReference type="InterPro" id="IPR023524">
    <property type="entry name" value="Uncharacterised_SprT-like"/>
</dbReference>
<dbReference type="NCBIfam" id="NF003339">
    <property type="entry name" value="PRK04351.1"/>
    <property type="match status" value="1"/>
</dbReference>
<dbReference type="Pfam" id="PF10263">
    <property type="entry name" value="SprT-like"/>
    <property type="match status" value="1"/>
</dbReference>
<dbReference type="Pfam" id="PF17283">
    <property type="entry name" value="Zn_ribbon_SprT"/>
    <property type="match status" value="1"/>
</dbReference>
<dbReference type="SMART" id="SM00731">
    <property type="entry name" value="SprT"/>
    <property type="match status" value="1"/>
</dbReference>
<gene>
    <name type="ordered locus">GWCH70_0215</name>
</gene>
<sequence length="155" mass="18478">MKQSDLQRLVERVSLQFFKKPFKHTATFNPRLRTTGGRYILQTHNIELNKKYYEAFGEEELIAIIKHELCHYHLHLEGKGYRHRDQDFRDLLRQVQAPRYCRPLPQQAQQRTKKVYVYVCSKCSLKYRRKKRVNTDKYVCGQCGGKLMLDNGGEI</sequence>
<feature type="chain" id="PRO_1000212837" description="Protein SprT-like">
    <location>
        <begin position="1"/>
        <end position="155"/>
    </location>
</feature>
<feature type="domain" description="SprT-like" evidence="1">
    <location>
        <begin position="6"/>
        <end position="148"/>
    </location>
</feature>
<feature type="active site" evidence="1">
    <location>
        <position position="68"/>
    </location>
</feature>
<feature type="binding site" evidence="1">
    <location>
        <position position="67"/>
    </location>
    <ligand>
        <name>Zn(2+)</name>
        <dbReference type="ChEBI" id="CHEBI:29105"/>
    </ligand>
</feature>
<feature type="binding site" evidence="1">
    <location>
        <position position="71"/>
    </location>
    <ligand>
        <name>Zn(2+)</name>
        <dbReference type="ChEBI" id="CHEBI:29105"/>
    </ligand>
</feature>
<proteinExistence type="inferred from homology"/>
<protein>
    <recommendedName>
        <fullName evidence="1">Protein SprT-like</fullName>
    </recommendedName>
</protein>
<keyword id="KW-0963">Cytoplasm</keyword>
<keyword id="KW-0479">Metal-binding</keyword>
<keyword id="KW-0862">Zinc</keyword>